<proteinExistence type="evidence at protein level"/>
<feature type="chain" id="PRO_0000114998" description="Glucose starvation modulator protein 1">
    <location>
        <begin position="1"/>
        <end position="618"/>
    </location>
</feature>
<feature type="domain" description="PAS">
    <location>
        <begin position="466"/>
        <end position="538"/>
    </location>
</feature>
<feature type="DNA-binding region" description="Zn(2)-C6 fungal-type" evidence="2">
    <location>
        <begin position="20"/>
        <end position="48"/>
    </location>
</feature>
<feature type="region of interest" description="Disordered" evidence="3">
    <location>
        <begin position="325"/>
        <end position="352"/>
    </location>
</feature>
<feature type="compositionally biased region" description="Basic and acidic residues" evidence="3">
    <location>
        <begin position="335"/>
        <end position="352"/>
    </location>
</feature>
<feature type="sequence conflict" description="In Ref. 4; AAU09751." evidence="4" ref="4">
    <original>F</original>
    <variation>L</variation>
    <location>
        <position position="611"/>
    </location>
</feature>
<reference key="1">
    <citation type="journal article" date="1995" name="Yeast">
        <title>A 37.5 kb region of yeast chromosome X includes the SME1, MEF2, GSH1 and CSD3 genes, a TCP-1-related gene, an open reading frame similar to the DAL80 gene, and a tRNA(Arg).</title>
        <authorList>
            <person name="Rasmussen S.W."/>
        </authorList>
    </citation>
    <scope>NUCLEOTIDE SEQUENCE [GENOMIC DNA]</scope>
    <source>
        <strain>ATCC 96604 / S288c / FY1679</strain>
    </source>
</reference>
<reference key="2">
    <citation type="journal article" date="1996" name="EMBO J.">
        <title>Complete nucleotide sequence of Saccharomyces cerevisiae chromosome X.</title>
        <authorList>
            <person name="Galibert F."/>
            <person name="Alexandraki D."/>
            <person name="Baur A."/>
            <person name="Boles E."/>
            <person name="Chalwatzis N."/>
            <person name="Chuat J.-C."/>
            <person name="Coster F."/>
            <person name="Cziepluch C."/>
            <person name="de Haan M."/>
            <person name="Domdey H."/>
            <person name="Durand P."/>
            <person name="Entian K.-D."/>
            <person name="Gatius M."/>
            <person name="Goffeau A."/>
            <person name="Grivell L.A."/>
            <person name="Hennemann A."/>
            <person name="Herbert C.J."/>
            <person name="Heumann K."/>
            <person name="Hilger F."/>
            <person name="Hollenberg C.P."/>
            <person name="Huang M.-E."/>
            <person name="Jacq C."/>
            <person name="Jauniaux J.-C."/>
            <person name="Katsoulou C."/>
            <person name="Kirchrath L."/>
            <person name="Kleine K."/>
            <person name="Kordes E."/>
            <person name="Koetter P."/>
            <person name="Liebl S."/>
            <person name="Louis E.J."/>
            <person name="Manus V."/>
            <person name="Mewes H.-W."/>
            <person name="Miosga T."/>
            <person name="Obermaier B."/>
            <person name="Perea J."/>
            <person name="Pohl T.M."/>
            <person name="Portetelle D."/>
            <person name="Pujol A."/>
            <person name="Purnelle B."/>
            <person name="Ramezani Rad M."/>
            <person name="Rasmussen S.W."/>
            <person name="Rose M."/>
            <person name="Rossau R."/>
            <person name="Schaaff-Gerstenschlaeger I."/>
            <person name="Smits P.H.M."/>
            <person name="Scarcez T."/>
            <person name="Soriano N."/>
            <person name="To Van D."/>
            <person name="Tzermia M."/>
            <person name="Van Broekhoven A."/>
            <person name="Vandenbol M."/>
            <person name="Wedler H."/>
            <person name="von Wettstein D."/>
            <person name="Wambutt R."/>
            <person name="Zagulski M."/>
            <person name="Zollner A."/>
            <person name="Karpfinger-Hartl L."/>
        </authorList>
    </citation>
    <scope>NUCLEOTIDE SEQUENCE [LARGE SCALE GENOMIC DNA]</scope>
    <source>
        <strain>ATCC 204508 / S288c</strain>
    </source>
</reference>
<reference key="3">
    <citation type="journal article" date="2014" name="G3 (Bethesda)">
        <title>The reference genome sequence of Saccharomyces cerevisiae: Then and now.</title>
        <authorList>
            <person name="Engel S.R."/>
            <person name="Dietrich F.S."/>
            <person name="Fisk D.G."/>
            <person name="Binkley G."/>
            <person name="Balakrishnan R."/>
            <person name="Costanzo M.C."/>
            <person name="Dwight S.S."/>
            <person name="Hitz B.C."/>
            <person name="Karra K."/>
            <person name="Nash R.S."/>
            <person name="Weng S."/>
            <person name="Wong E.D."/>
            <person name="Lloyd P."/>
            <person name="Skrzypek M.S."/>
            <person name="Miyasato S.R."/>
            <person name="Simison M."/>
            <person name="Cherry J.M."/>
        </authorList>
    </citation>
    <scope>GENOME REANNOTATION</scope>
    <source>
        <strain>ATCC 204508 / S288c</strain>
    </source>
</reference>
<reference key="4">
    <citation type="journal article" date="2007" name="Genome Res.">
        <title>Approaching a complete repository of sequence-verified protein-encoding clones for Saccharomyces cerevisiae.</title>
        <authorList>
            <person name="Hu Y."/>
            <person name="Rolfs A."/>
            <person name="Bhullar B."/>
            <person name="Murthy T.V.S."/>
            <person name="Zhu C."/>
            <person name="Berger M.F."/>
            <person name="Camargo A.A."/>
            <person name="Kelley F."/>
            <person name="McCarron S."/>
            <person name="Jepson D."/>
            <person name="Richardson A."/>
            <person name="Raphael J."/>
            <person name="Moreira D."/>
            <person name="Taycher E."/>
            <person name="Zuo D."/>
            <person name="Mohr S."/>
            <person name="Kane M.F."/>
            <person name="Williamson J."/>
            <person name="Simpson A.J.G."/>
            <person name="Bulyk M.L."/>
            <person name="Harlow E."/>
            <person name="Marsischky G."/>
            <person name="Kolodner R.D."/>
            <person name="LaBaer J."/>
        </authorList>
    </citation>
    <scope>NUCLEOTIDE SEQUENCE [GENOMIC DNA]</scope>
    <source>
        <strain>ATCC 204508 / S288c</strain>
    </source>
</reference>
<reference key="5">
    <citation type="journal article" date="2005" name="Int. J. Mol. Med.">
        <title>Computationally analyzing the possible biological function of YJL103C--an ORF potentially involved in the regulation of energy process in yeast.</title>
        <authorList>
            <person name="Deng Y."/>
            <person name="He T."/>
            <person name="Wu Y."/>
            <person name="Vanka P."/>
            <person name="Yang G."/>
            <person name="Huang Y."/>
            <person name="Yao H."/>
            <person name="Brown S.J."/>
        </authorList>
    </citation>
    <scope>PREDICTION OF FUNCTION</scope>
</reference>
<reference key="6">
    <citation type="journal article" date="2006" name="Proc. Natl. Acad. Sci. U.S.A.">
        <title>Linking DNA-binding proteins to their recognition sequences by using protein microarrays.</title>
        <authorList>
            <person name="Ho S.-W."/>
            <person name="Jona G."/>
            <person name="Chen C.T.L."/>
            <person name="Johnston M."/>
            <person name="Snyder M."/>
        </authorList>
    </citation>
    <scope>DNA-BINDING</scope>
</reference>
<reference key="7">
    <citation type="journal article" date="2008" name="Nucleic Acids Res.">
        <title>Improved genome-wide localization by ChIP-chip using double-round T7 RNA polymerase-based amplification.</title>
        <authorList>
            <person name="van Bakel H."/>
            <person name="van Werven F.J."/>
            <person name="Radonjic M."/>
            <person name="Brok M.O."/>
            <person name="van Leenen D."/>
            <person name="Holstege F.C.P."/>
            <person name="Timmers H.T.M."/>
        </authorList>
    </citation>
    <scope>DNA-BINDING</scope>
</reference>
<organism>
    <name type="scientific">Saccharomyces cerevisiae (strain ATCC 204508 / S288c)</name>
    <name type="common">Baker's yeast</name>
    <dbReference type="NCBI Taxonomy" id="559292"/>
    <lineage>
        <taxon>Eukaryota</taxon>
        <taxon>Fungi</taxon>
        <taxon>Dikarya</taxon>
        <taxon>Ascomycota</taxon>
        <taxon>Saccharomycotina</taxon>
        <taxon>Saccharomycetes</taxon>
        <taxon>Saccharomycetales</taxon>
        <taxon>Saccharomycetaceae</taxon>
        <taxon>Saccharomyces</taxon>
    </lineage>
</organism>
<protein>
    <recommendedName>
        <fullName>Glucose starvation modulator protein 1</fullName>
    </recommendedName>
</protein>
<gene>
    <name type="primary">GSM1</name>
    <name type="ordered locus">YJL103C</name>
    <name type="ORF">J0824</name>
</gene>
<keyword id="KW-0238">DNA-binding</keyword>
<keyword id="KW-0479">Metal-binding</keyword>
<keyword id="KW-0539">Nucleus</keyword>
<keyword id="KW-1185">Reference proteome</keyword>
<keyword id="KW-0749">Sporulation</keyword>
<keyword id="KW-0804">Transcription</keyword>
<keyword id="KW-0805">Transcription regulation</keyword>
<keyword id="KW-0862">Zinc</keyword>
<evidence type="ECO:0000250" key="1"/>
<evidence type="ECO:0000255" key="2">
    <source>
        <dbReference type="PROSITE-ProRule" id="PRU00227"/>
    </source>
</evidence>
<evidence type="ECO:0000256" key="3">
    <source>
        <dbReference type="SAM" id="MobiDB-lite"/>
    </source>
</evidence>
<evidence type="ECO:0000305" key="4"/>
<name>GSM1_YEAST</name>
<sequence>MTKKLPSELKQTRKSIQTACEFCHTKHIQCDVGRPCQNCLKRNIGKFCRDKKRKSRKRIEKHGTQPYLNLGKRLVIHDVPSKTVSPSSVHLQRDFLSSDQEKPGKTPAHNTNIQYTYNINDNFQSAGSIPRITNFNTNNRQTVLENTSNNISASQAVHLMNDPIIPTVRKSTLNLKSHFLEQHKAMQQPLATNCLVATSNVPVHSGMDDSNKSDDDVDDETNIHFDSMWCNDEYMKLKDIVDISTPFLPNNSQIFSLQESEYPNPSASTRGNSSLHLTNLLNSTKSVNDQKDSSIGHSTSTFNTYDEVVSRPFISLDMLHLNRGANANTHPSHNAKLESECDSSSHSDADLEKHDTDFISPSKFRELVKTPQDLYDNKCLIKPHNYKLAYTKLLTTLRKKFLEGAEIDKSASVKDEHSTQKHNLRYDLEVIIRSILERYAPIFISLTSNMIEEDLLLQEVTLQRALLDLENMAKLVSCTPMCIWRRSGEICFVSNEFYSLTGFNKNLLLDRTSFIFEYLDHKSVSNYFQIFNELLAFGYNDINKRKKLLMLNACSSTSSKITEGFSFTTDGKAIFTKCNLLLSNGLYLKCACCWTVKRDSFNIPILVMGQFLPIFEMD</sequence>
<dbReference type="EMBL" id="X85021">
    <property type="protein sequence ID" value="CAA59391.1"/>
    <property type="molecule type" value="Genomic_DNA"/>
</dbReference>
<dbReference type="EMBL" id="Z49378">
    <property type="protein sequence ID" value="CAA89398.1"/>
    <property type="molecule type" value="Genomic_DNA"/>
</dbReference>
<dbReference type="EMBL" id="AY723834">
    <property type="protein sequence ID" value="AAU09751.1"/>
    <property type="molecule type" value="Genomic_DNA"/>
</dbReference>
<dbReference type="EMBL" id="BK006943">
    <property type="protein sequence ID" value="DAA08697.1"/>
    <property type="molecule type" value="Genomic_DNA"/>
</dbReference>
<dbReference type="PIR" id="S53384">
    <property type="entry name" value="S53384"/>
</dbReference>
<dbReference type="RefSeq" id="NP_012432.1">
    <property type="nucleotide sequence ID" value="NM_001181536.1"/>
</dbReference>
<dbReference type="BioGRID" id="33653">
    <property type="interactions" value="48"/>
</dbReference>
<dbReference type="FunCoup" id="P42950">
    <property type="interactions" value="251"/>
</dbReference>
<dbReference type="IntAct" id="P42950">
    <property type="interactions" value="2"/>
</dbReference>
<dbReference type="STRING" id="4932.YJL103C"/>
<dbReference type="iPTMnet" id="P42950"/>
<dbReference type="PaxDb" id="4932-YJL103C"/>
<dbReference type="PeptideAtlas" id="P42950"/>
<dbReference type="EnsemblFungi" id="YJL103C_mRNA">
    <property type="protein sequence ID" value="YJL103C"/>
    <property type="gene ID" value="YJL103C"/>
</dbReference>
<dbReference type="GeneID" id="853341"/>
<dbReference type="KEGG" id="sce:YJL103C"/>
<dbReference type="AGR" id="SGD:S000003639"/>
<dbReference type="SGD" id="S000003639">
    <property type="gene designation" value="GSM1"/>
</dbReference>
<dbReference type="VEuPathDB" id="FungiDB:YJL103C"/>
<dbReference type="eggNOG" id="ENOG502R2ZP">
    <property type="taxonomic scope" value="Eukaryota"/>
</dbReference>
<dbReference type="GeneTree" id="ENSGT00940000176385"/>
<dbReference type="HOGENOM" id="CLU_010748_2_2_1"/>
<dbReference type="InParanoid" id="P42950"/>
<dbReference type="OMA" id="FCHEKHL"/>
<dbReference type="OrthoDB" id="2538135at2759"/>
<dbReference type="BioCyc" id="YEAST:G3O-31557-MONOMER"/>
<dbReference type="BioGRID-ORCS" id="853341">
    <property type="hits" value="0 hits in 13 CRISPR screens"/>
</dbReference>
<dbReference type="PRO" id="PR:P42950"/>
<dbReference type="Proteomes" id="UP000002311">
    <property type="component" value="Chromosome X"/>
</dbReference>
<dbReference type="RNAct" id="P42950">
    <property type="molecule type" value="protein"/>
</dbReference>
<dbReference type="GO" id="GO:0005634">
    <property type="term" value="C:nucleus"/>
    <property type="evidence" value="ECO:0000318"/>
    <property type="project" value="GO_Central"/>
</dbReference>
<dbReference type="GO" id="GO:0003700">
    <property type="term" value="F:DNA-binding transcription factor activity"/>
    <property type="evidence" value="ECO:0000314"/>
    <property type="project" value="SGD"/>
</dbReference>
<dbReference type="GO" id="GO:0000981">
    <property type="term" value="F:DNA-binding transcription factor activity, RNA polymerase II-specific"/>
    <property type="evidence" value="ECO:0007669"/>
    <property type="project" value="InterPro"/>
</dbReference>
<dbReference type="GO" id="GO:0000977">
    <property type="term" value="F:RNA polymerase II transcription regulatory region sequence-specific DNA binding"/>
    <property type="evidence" value="ECO:0000318"/>
    <property type="project" value="GO_Central"/>
</dbReference>
<dbReference type="GO" id="GO:0043565">
    <property type="term" value="F:sequence-specific DNA binding"/>
    <property type="evidence" value="ECO:0007005"/>
    <property type="project" value="SGD"/>
</dbReference>
<dbReference type="GO" id="GO:0008270">
    <property type="term" value="F:zinc ion binding"/>
    <property type="evidence" value="ECO:0007669"/>
    <property type="project" value="InterPro"/>
</dbReference>
<dbReference type="GO" id="GO:0009267">
    <property type="term" value="P:cellular response to starvation"/>
    <property type="evidence" value="ECO:0000318"/>
    <property type="project" value="GO_Central"/>
</dbReference>
<dbReference type="GO" id="GO:0006357">
    <property type="term" value="P:regulation of transcription by RNA polymerase II"/>
    <property type="evidence" value="ECO:0000314"/>
    <property type="project" value="SGD"/>
</dbReference>
<dbReference type="GO" id="GO:0030435">
    <property type="term" value="P:sporulation resulting in formation of a cellular spore"/>
    <property type="evidence" value="ECO:0007669"/>
    <property type="project" value="UniProtKB-KW"/>
</dbReference>
<dbReference type="CDD" id="cd00067">
    <property type="entry name" value="GAL4"/>
    <property type="match status" value="1"/>
</dbReference>
<dbReference type="Gene3D" id="4.10.240.10">
    <property type="entry name" value="Zn(2)-C6 fungal-type DNA-binding domain"/>
    <property type="match status" value="1"/>
</dbReference>
<dbReference type="InterPro" id="IPR050335">
    <property type="entry name" value="ERT1_acuK_gluconeogen_tf"/>
</dbReference>
<dbReference type="InterPro" id="IPR056751">
    <property type="entry name" value="PAS_13"/>
</dbReference>
<dbReference type="InterPro" id="IPR036864">
    <property type="entry name" value="Zn2-C6_fun-type_DNA-bd_sf"/>
</dbReference>
<dbReference type="InterPro" id="IPR001138">
    <property type="entry name" value="Zn2Cys6_DnaBD"/>
</dbReference>
<dbReference type="PANTHER" id="PTHR47659:SF8">
    <property type="entry name" value="GLUCOSE STARVATION MODULATOR PROTEIN 1"/>
    <property type="match status" value="1"/>
</dbReference>
<dbReference type="PANTHER" id="PTHR47659">
    <property type="entry name" value="ZN(II)2CYS6 TRANSCRIPTION FACTOR (EUROFUNG)-RELATED"/>
    <property type="match status" value="1"/>
</dbReference>
<dbReference type="Pfam" id="PF24990">
    <property type="entry name" value="PAS_13"/>
    <property type="match status" value="1"/>
</dbReference>
<dbReference type="Pfam" id="PF00172">
    <property type="entry name" value="Zn_clus"/>
    <property type="match status" value="1"/>
</dbReference>
<dbReference type="SMART" id="SM00066">
    <property type="entry name" value="GAL4"/>
    <property type="match status" value="1"/>
</dbReference>
<dbReference type="SUPFAM" id="SSF57701">
    <property type="entry name" value="Zn2/Cys6 DNA-binding domain"/>
    <property type="match status" value="1"/>
</dbReference>
<dbReference type="PROSITE" id="PS00463">
    <property type="entry name" value="ZN2_CY6_FUNGAL_1"/>
    <property type="match status" value="1"/>
</dbReference>
<dbReference type="PROSITE" id="PS50048">
    <property type="entry name" value="ZN2_CY6_FUNGAL_2"/>
    <property type="match status" value="1"/>
</dbReference>
<accession>P42950</accession>
<accession>D6VW81</accession>
<accession>Q66R68</accession>
<comment type="function">
    <text evidence="1">Transcription factor which regulates nonfermentable carbon utilization (By similarity). Binds specifically to 5'-CGGN(8)CGG-3' and 5'-CGGN(9)CGG-3' sequences in the promoter region.</text>
</comment>
<comment type="subcellular location">
    <subcellularLocation>
        <location evidence="4">Nucleus</location>
    </subcellularLocation>
</comment>
<comment type="similarity">
    <text evidence="4">Belongs to the ERT1/acuK family.</text>
</comment>